<accession>Q07807</accession>
<accession>D6VXY9</accession>
<accession>Q02601</accession>
<name>PUF3_YEAST</name>
<keyword id="KW-0002">3D-structure</keyword>
<keyword id="KW-0963">Cytoplasm</keyword>
<keyword id="KW-0472">Membrane</keyword>
<keyword id="KW-0496">Mitochondrion</keyword>
<keyword id="KW-1000">Mitochondrion outer membrane</keyword>
<keyword id="KW-0597">Phosphoprotein</keyword>
<keyword id="KW-1185">Reference proteome</keyword>
<keyword id="KW-0677">Repeat</keyword>
<keyword id="KW-0694">RNA-binding</keyword>
<gene>
    <name type="primary">PUF3</name>
    <name type="ordered locus">YLL013C</name>
    <name type="ORF">L1325</name>
</gene>
<evidence type="ECO:0000255" key="1">
    <source>
        <dbReference type="PROSITE-ProRule" id="PRU00318"/>
    </source>
</evidence>
<evidence type="ECO:0000256" key="2">
    <source>
        <dbReference type="SAM" id="MobiDB-lite"/>
    </source>
</evidence>
<evidence type="ECO:0000269" key="3">
    <source>
    </source>
</evidence>
<evidence type="ECO:0000269" key="4">
    <source>
    </source>
</evidence>
<evidence type="ECO:0000269" key="5">
    <source>
    </source>
</evidence>
<evidence type="ECO:0000269" key="6">
    <source>
    </source>
</evidence>
<evidence type="ECO:0000269" key="7">
    <source>
    </source>
</evidence>
<evidence type="ECO:0000269" key="8">
    <source>
    </source>
</evidence>
<evidence type="ECO:0000269" key="9">
    <source>
    </source>
</evidence>
<evidence type="ECO:0000269" key="10">
    <source>
    </source>
</evidence>
<evidence type="ECO:0000305" key="11"/>
<evidence type="ECO:0007744" key="12">
    <source>
    </source>
</evidence>
<evidence type="ECO:0007744" key="13">
    <source>
    </source>
</evidence>
<evidence type="ECO:0007829" key="14">
    <source>
        <dbReference type="PDB" id="3K49"/>
    </source>
</evidence>
<organism>
    <name type="scientific">Saccharomyces cerevisiae (strain ATCC 204508 / S288c)</name>
    <name type="common">Baker's yeast</name>
    <dbReference type="NCBI Taxonomy" id="559292"/>
    <lineage>
        <taxon>Eukaryota</taxon>
        <taxon>Fungi</taxon>
        <taxon>Dikarya</taxon>
        <taxon>Ascomycota</taxon>
        <taxon>Saccharomycotina</taxon>
        <taxon>Saccharomycetes</taxon>
        <taxon>Saccharomycetales</taxon>
        <taxon>Saccharomycetaceae</taxon>
        <taxon>Saccharomyces</taxon>
    </lineage>
</organism>
<protein>
    <recommendedName>
        <fullName>mRNA-binding protein PUF3</fullName>
    </recommendedName>
    <alternativeName>
        <fullName>Pumilio homology domain family member 3</fullName>
    </alternativeName>
</protein>
<dbReference type="EMBL" id="X97560">
    <property type="protein sequence ID" value="CAA66165.1"/>
    <property type="molecule type" value="Genomic_DNA"/>
</dbReference>
<dbReference type="EMBL" id="X91488">
    <property type="protein sequence ID" value="CAA62779.1"/>
    <property type="molecule type" value="Genomic_DNA"/>
</dbReference>
<dbReference type="EMBL" id="Z73117">
    <property type="protein sequence ID" value="CAA97457.1"/>
    <property type="molecule type" value="Genomic_DNA"/>
</dbReference>
<dbReference type="EMBL" id="Z73118">
    <property type="protein sequence ID" value="CAA97458.1"/>
    <property type="molecule type" value="Genomic_DNA"/>
</dbReference>
<dbReference type="EMBL" id="BK006945">
    <property type="protein sequence ID" value="DAA09305.1"/>
    <property type="molecule type" value="Genomic_DNA"/>
</dbReference>
<dbReference type="PIR" id="S64755">
    <property type="entry name" value="S64755"/>
</dbReference>
<dbReference type="RefSeq" id="NP_013088.1">
    <property type="nucleotide sequence ID" value="NM_001181833.1"/>
</dbReference>
<dbReference type="PDB" id="3K49">
    <property type="method" value="X-ray"/>
    <property type="resolution" value="2.50 A"/>
    <property type="chains" value="A/C/E=511-879"/>
</dbReference>
<dbReference type="PDB" id="3K4E">
    <property type="method" value="X-ray"/>
    <property type="resolution" value="3.20 A"/>
    <property type="chains" value="A/C/E=511-879"/>
</dbReference>
<dbReference type="PDBsum" id="3K49"/>
<dbReference type="PDBsum" id="3K4E"/>
<dbReference type="SMR" id="Q07807"/>
<dbReference type="BioGRID" id="31238">
    <property type="interactions" value="1985"/>
</dbReference>
<dbReference type="DIP" id="DIP-4449N"/>
<dbReference type="FunCoup" id="Q07807">
    <property type="interactions" value="327"/>
</dbReference>
<dbReference type="IntAct" id="Q07807">
    <property type="interactions" value="31"/>
</dbReference>
<dbReference type="MINT" id="Q07807"/>
<dbReference type="STRING" id="4932.YLL013C"/>
<dbReference type="GlyGen" id="Q07807">
    <property type="glycosylation" value="2 sites, 1 O-linked glycan (2 sites)"/>
</dbReference>
<dbReference type="iPTMnet" id="Q07807"/>
<dbReference type="PaxDb" id="4932-YLL013C"/>
<dbReference type="PeptideAtlas" id="Q07807"/>
<dbReference type="EnsemblFungi" id="YLL013C_mRNA">
    <property type="protein sequence ID" value="YLL013C"/>
    <property type="gene ID" value="YLL013C"/>
</dbReference>
<dbReference type="GeneID" id="850647"/>
<dbReference type="KEGG" id="sce:YLL013C"/>
<dbReference type="AGR" id="SGD:S000003936"/>
<dbReference type="SGD" id="S000003936">
    <property type="gene designation" value="PUF3"/>
</dbReference>
<dbReference type="VEuPathDB" id="FungiDB:YLL013C"/>
<dbReference type="eggNOG" id="KOG1488">
    <property type="taxonomic scope" value="Eukaryota"/>
</dbReference>
<dbReference type="GeneTree" id="ENSGT00940000169170"/>
<dbReference type="HOGENOM" id="CLU_004017_6_1_1"/>
<dbReference type="InParanoid" id="Q07807"/>
<dbReference type="OMA" id="VEYSKHK"/>
<dbReference type="OrthoDB" id="668540at2759"/>
<dbReference type="BioCyc" id="YEAST:G3O-32118-MONOMER"/>
<dbReference type="BioGRID-ORCS" id="850647">
    <property type="hits" value="6 hits in 10 CRISPR screens"/>
</dbReference>
<dbReference type="EvolutionaryTrace" id="Q07807"/>
<dbReference type="PRO" id="PR:Q07807"/>
<dbReference type="Proteomes" id="UP000002311">
    <property type="component" value="Chromosome XII"/>
</dbReference>
<dbReference type="RNAct" id="Q07807">
    <property type="molecule type" value="protein"/>
</dbReference>
<dbReference type="GO" id="GO:0005737">
    <property type="term" value="C:cytoplasm"/>
    <property type="evidence" value="ECO:0000314"/>
    <property type="project" value="SGD"/>
</dbReference>
<dbReference type="GO" id="GO:0032473">
    <property type="term" value="C:cytoplasmic side of mitochondrial outer membrane"/>
    <property type="evidence" value="ECO:0000314"/>
    <property type="project" value="SGD"/>
</dbReference>
<dbReference type="GO" id="GO:0003730">
    <property type="term" value="F:mRNA 3'-UTR binding"/>
    <property type="evidence" value="ECO:0000318"/>
    <property type="project" value="GO_Central"/>
</dbReference>
<dbReference type="GO" id="GO:0003729">
    <property type="term" value="F:mRNA binding"/>
    <property type="evidence" value="ECO:0000314"/>
    <property type="project" value="SGD"/>
</dbReference>
<dbReference type="GO" id="GO:0009060">
    <property type="term" value="P:aerobic respiration"/>
    <property type="evidence" value="ECO:0000315"/>
    <property type="project" value="SGD"/>
</dbReference>
<dbReference type="GO" id="GO:0042149">
    <property type="term" value="P:cellular response to glucose starvation"/>
    <property type="evidence" value="ECO:0000315"/>
    <property type="project" value="SGD"/>
</dbReference>
<dbReference type="GO" id="GO:0008298">
    <property type="term" value="P:intracellular mRNA localization"/>
    <property type="evidence" value="ECO:0000315"/>
    <property type="project" value="SGD"/>
</dbReference>
<dbReference type="GO" id="GO:0051646">
    <property type="term" value="P:mitochondrion localization"/>
    <property type="evidence" value="ECO:0000315"/>
    <property type="project" value="SGD"/>
</dbReference>
<dbReference type="GO" id="GO:0007005">
    <property type="term" value="P:mitochondrion organization"/>
    <property type="evidence" value="ECO:0000315"/>
    <property type="project" value="SGD"/>
</dbReference>
<dbReference type="GO" id="GO:0000956">
    <property type="term" value="P:nuclear-transcribed mRNA catabolic process"/>
    <property type="evidence" value="ECO:0000314"/>
    <property type="project" value="SGD"/>
</dbReference>
<dbReference type="GO" id="GO:0000288">
    <property type="term" value="P:nuclear-transcribed mRNA catabolic process, deadenylation-dependent decay"/>
    <property type="evidence" value="ECO:0000315"/>
    <property type="project" value="SGD"/>
</dbReference>
<dbReference type="GO" id="GO:0045727">
    <property type="term" value="P:positive regulation of translation"/>
    <property type="evidence" value="ECO:0000315"/>
    <property type="project" value="SGD"/>
</dbReference>
<dbReference type="GO" id="GO:0010795">
    <property type="term" value="P:regulation of ubiquinone biosynthetic process"/>
    <property type="evidence" value="ECO:0000315"/>
    <property type="project" value="SGD"/>
</dbReference>
<dbReference type="CDD" id="cd07920">
    <property type="entry name" value="Pumilio"/>
    <property type="match status" value="1"/>
</dbReference>
<dbReference type="FunFam" id="1.25.10.10:FF:000004">
    <property type="entry name" value="Pumilio homolog 1 isoform 2"/>
    <property type="match status" value="1"/>
</dbReference>
<dbReference type="Gene3D" id="1.25.10.10">
    <property type="entry name" value="Leucine-rich Repeat Variant"/>
    <property type="match status" value="1"/>
</dbReference>
<dbReference type="InterPro" id="IPR011989">
    <property type="entry name" value="ARM-like"/>
</dbReference>
<dbReference type="InterPro" id="IPR016024">
    <property type="entry name" value="ARM-type_fold"/>
</dbReference>
<dbReference type="InterPro" id="IPR033133">
    <property type="entry name" value="PUM-HD"/>
</dbReference>
<dbReference type="InterPro" id="IPR033712">
    <property type="entry name" value="Pumilio_RNA-bd"/>
</dbReference>
<dbReference type="InterPro" id="IPR001313">
    <property type="entry name" value="Pumilio_RNA-bd_rpt"/>
</dbReference>
<dbReference type="PANTHER" id="PTHR12537:SF12">
    <property type="entry name" value="MATERNAL PROTEIN PUMILIO"/>
    <property type="match status" value="1"/>
</dbReference>
<dbReference type="PANTHER" id="PTHR12537">
    <property type="entry name" value="RNA BINDING PROTEIN PUMILIO-RELATED"/>
    <property type="match status" value="1"/>
</dbReference>
<dbReference type="Pfam" id="PF00806">
    <property type="entry name" value="PUF"/>
    <property type="match status" value="8"/>
</dbReference>
<dbReference type="SMART" id="SM00025">
    <property type="entry name" value="Pumilio"/>
    <property type="match status" value="8"/>
</dbReference>
<dbReference type="SUPFAM" id="SSF48371">
    <property type="entry name" value="ARM repeat"/>
    <property type="match status" value="1"/>
</dbReference>
<dbReference type="PROSITE" id="PS50302">
    <property type="entry name" value="PUM"/>
    <property type="match status" value="8"/>
</dbReference>
<dbReference type="PROSITE" id="PS50303">
    <property type="entry name" value="PUM_HD"/>
    <property type="match status" value="1"/>
</dbReference>
<feature type="chain" id="PRO_0000075924" description="mRNA-binding protein PUF3">
    <location>
        <begin position="1"/>
        <end position="879"/>
    </location>
</feature>
<feature type="domain" description="PUM-HD" evidence="1">
    <location>
        <begin position="513"/>
        <end position="871"/>
    </location>
</feature>
<feature type="repeat" description="Pumilio 1">
    <location>
        <begin position="538"/>
        <end position="573"/>
    </location>
</feature>
<feature type="repeat" description="Pumilio 2">
    <location>
        <begin position="574"/>
        <end position="609"/>
    </location>
</feature>
<feature type="repeat" description="Pumilio 3">
    <location>
        <begin position="610"/>
        <end position="645"/>
    </location>
</feature>
<feature type="repeat" description="Pumilio 4">
    <location>
        <begin position="646"/>
        <end position="681"/>
    </location>
</feature>
<feature type="repeat" description="Pumilio 5">
    <location>
        <begin position="682"/>
        <end position="717"/>
    </location>
</feature>
<feature type="repeat" description="Pumilio 6">
    <location>
        <begin position="718"/>
        <end position="759"/>
    </location>
</feature>
<feature type="repeat" description="Pumilio 7">
    <location>
        <begin position="760"/>
        <end position="795"/>
    </location>
</feature>
<feature type="repeat" description="Pumilio 8">
    <location>
        <begin position="807"/>
        <end position="844"/>
    </location>
</feature>
<feature type="region of interest" description="Disordered" evidence="2">
    <location>
        <begin position="222"/>
        <end position="256"/>
    </location>
</feature>
<feature type="region of interest" description="Disordered" evidence="2">
    <location>
        <begin position="344"/>
        <end position="417"/>
    </location>
</feature>
<feature type="region of interest" description="Disordered" evidence="2">
    <location>
        <begin position="443"/>
        <end position="512"/>
    </location>
</feature>
<feature type="compositionally biased region" description="Low complexity" evidence="2">
    <location>
        <begin position="237"/>
        <end position="255"/>
    </location>
</feature>
<feature type="compositionally biased region" description="Pro residues" evidence="2">
    <location>
        <begin position="370"/>
        <end position="395"/>
    </location>
</feature>
<feature type="compositionally biased region" description="Low complexity" evidence="2">
    <location>
        <begin position="398"/>
        <end position="417"/>
    </location>
</feature>
<feature type="compositionally biased region" description="Low complexity" evidence="2">
    <location>
        <begin position="449"/>
        <end position="463"/>
    </location>
</feature>
<feature type="compositionally biased region" description="Low complexity" evidence="2">
    <location>
        <begin position="472"/>
        <end position="491"/>
    </location>
</feature>
<feature type="compositionally biased region" description="Low complexity" evidence="2">
    <location>
        <begin position="501"/>
        <end position="512"/>
    </location>
</feature>
<feature type="modified residue" description="Phosphothreonine" evidence="12">
    <location>
        <position position="83"/>
    </location>
</feature>
<feature type="modified residue" description="Phosphoserine" evidence="12">
    <location>
        <position position="207"/>
    </location>
</feature>
<feature type="modified residue" description="Phosphoserine" evidence="13">
    <location>
        <position position="210"/>
    </location>
</feature>
<feature type="mutagenesis site" description="Prevents binding to COX17 mRNA and its rapid decay and increases affinity to HO mRNA, a PUF5 target." evidence="6">
    <original>S</original>
    <variation>C</variation>
    <location>
        <position position="553"/>
    </location>
</feature>
<feature type="helix" evidence="14">
    <location>
        <begin position="516"/>
        <end position="522"/>
    </location>
</feature>
<feature type="helix" evidence="14">
    <location>
        <begin position="536"/>
        <end position="539"/>
    </location>
</feature>
<feature type="helix" evidence="14">
    <location>
        <begin position="543"/>
        <end position="547"/>
    </location>
</feature>
<feature type="helix" evidence="14">
    <location>
        <begin position="550"/>
        <end position="560"/>
    </location>
</feature>
<feature type="helix" evidence="14">
    <location>
        <begin position="565"/>
        <end position="575"/>
    </location>
</feature>
<feature type="helix" evidence="14">
    <location>
        <begin position="576"/>
        <end position="578"/>
    </location>
</feature>
<feature type="helix" evidence="14">
    <location>
        <begin position="579"/>
        <end position="584"/>
    </location>
</feature>
<feature type="turn" evidence="14">
    <location>
        <begin position="586"/>
        <end position="588"/>
    </location>
</feature>
<feature type="helix" evidence="14">
    <location>
        <begin position="589"/>
        <end position="598"/>
    </location>
</feature>
<feature type="helix" evidence="14">
    <location>
        <begin position="601"/>
        <end position="611"/>
    </location>
</feature>
<feature type="helix" evidence="14">
    <location>
        <begin position="615"/>
        <end position="620"/>
    </location>
</feature>
<feature type="helix" evidence="14">
    <location>
        <begin position="624"/>
        <end position="634"/>
    </location>
</feature>
<feature type="helix" evidence="14">
    <location>
        <begin position="637"/>
        <end position="644"/>
    </location>
</feature>
<feature type="helix" evidence="14">
    <location>
        <begin position="645"/>
        <end position="647"/>
    </location>
</feature>
<feature type="helix" evidence="14">
    <location>
        <begin position="651"/>
        <end position="656"/>
    </location>
</feature>
<feature type="helix" evidence="14">
    <location>
        <begin position="660"/>
        <end position="670"/>
    </location>
</feature>
<feature type="helix" evidence="14">
    <location>
        <begin position="673"/>
        <end position="675"/>
    </location>
</feature>
<feature type="turn" evidence="14">
    <location>
        <begin position="677"/>
        <end position="679"/>
    </location>
</feature>
<feature type="helix" evidence="14">
    <location>
        <begin position="680"/>
        <end position="683"/>
    </location>
</feature>
<feature type="turn" evidence="14">
    <location>
        <begin position="684"/>
        <end position="686"/>
    </location>
</feature>
<feature type="helix" evidence="14">
    <location>
        <begin position="687"/>
        <end position="691"/>
    </location>
</feature>
<feature type="helix" evidence="14">
    <location>
        <begin position="696"/>
        <end position="706"/>
    </location>
</feature>
<feature type="helix" evidence="14">
    <location>
        <begin position="709"/>
        <end position="717"/>
    </location>
</feature>
<feature type="turn" evidence="14">
    <location>
        <begin position="718"/>
        <end position="721"/>
    </location>
</feature>
<feature type="helix" evidence="14">
    <location>
        <begin position="723"/>
        <end position="728"/>
    </location>
</feature>
<feature type="helix" evidence="14">
    <location>
        <begin position="732"/>
        <end position="740"/>
    </location>
</feature>
<feature type="helix" evidence="14">
    <location>
        <begin position="748"/>
        <end position="762"/>
    </location>
</feature>
<feature type="helix" evidence="14">
    <location>
        <begin position="765"/>
        <end position="769"/>
    </location>
</feature>
<feature type="helix" evidence="14">
    <location>
        <begin position="774"/>
        <end position="784"/>
    </location>
</feature>
<feature type="helix" evidence="14">
    <location>
        <begin position="787"/>
        <end position="794"/>
    </location>
</feature>
<feature type="turn" evidence="14">
    <location>
        <begin position="795"/>
        <end position="797"/>
    </location>
</feature>
<feature type="helix" evidence="14">
    <location>
        <begin position="802"/>
        <end position="806"/>
    </location>
</feature>
<feature type="helix" evidence="14">
    <location>
        <begin position="813"/>
        <end position="818"/>
    </location>
</feature>
<feature type="helix" evidence="14">
    <location>
        <begin position="823"/>
        <end position="833"/>
    </location>
</feature>
<feature type="helix" evidence="14">
    <location>
        <begin position="836"/>
        <end position="855"/>
    </location>
</feature>
<feature type="helix" evidence="14">
    <location>
        <begin position="865"/>
        <end position="874"/>
    </location>
</feature>
<sequence>MEMNMDMDMDMELASIVSSLSALSHSNNNGGQAAAAGIVNGGAAGSQQIGGFRRSSFTTANEVDSEILLLHGSSESSPIFKKTALSVGTAPPFSTNSKKFFGNGGNYYQYRSTDTASLSSASYNNYHTHHTAANLGKNNKVNHLLGQYSASIAGPVYYNGNDNNNSGGEGFFEKFGKSLIDGTRELESQDRPDAVNTQSQFISKSVSNASLDTQNTFEQNVESDKNFNKLNRNTTNSGSLYHSSSNSGSSASLESENAHYPKRNIWNVANTPVFRPSNNPAAVGATNVALPNQQDGPANNNFPPYMNGFPPNQFHQGPHYQNFPNYLIGSPSNFISQMISVQIPANEDTEDSNGKKKKKANRPSSVSSPSSPPNNSPFPFAYPNPMMFMPPPPLSAPQQQQQQQQQQQQEDQQQQQQQENPYIYYPTPNPIPVKMPKDEKTFKKRNNKNHPANNSNNANKQANPYLENSIPTKNTSKKNASSKSNESTANNHKSHSHSHPHSQSLQQQQQTYHRSPLLEQLRNSSSDKNSNSNMSLKDIFGHSLEFCKDQHGSRFIQRELATSPASEKEVIFNEIRDDAIELSNDVFGNYVIQKFFEFGSKIQKNTLVDQFKGNMKQLSLQMYACRVIQKALEYIDSNQRIELVLELSDSVLQMIKDQNGNHVIQKAIETIPIEKLPFILSSLTGHIYHLSTHSYGCRVIQRLLEFGSSEDQESILNELKDFIPYLIQDQYGNYVIQYVLQQDQFTNKEMVDIKQEIIETVANNVVEYSKHKFASNVVEKSILYGSKNQKDLIISKILPRDKNHALNLEDDSPMILMIKDQFANYVIQKLVNVSEGEGKKLIVIAIRAYLDKLNKSNSLGNRHLASVEKLAALVENAEV</sequence>
<comment type="function">
    <text evidence="3 5 6 7 8 9 10">RNA-binding protein involved in post-transcriptional regulation. Negatively regulates expression of COX17 by binding to the 3'-UTR of COX17 mRNA. Promotes decay of COX17 mRNA by enhancing its rate of deadenylation and subsequent turnover. Predominantly binds to mRNAs encoding mitochondrial proteins and localizes them to the vicinity of mitochondria for translation. Regulates mitochondrial biogenesis, motility and morphology.</text>
</comment>
<comment type="subcellular location">
    <subcellularLocation>
        <location>Mitochondrion outer membrane</location>
        <topology>Peripheral membrane protein</topology>
        <orientation>Cytoplasmic side</orientation>
    </subcellularLocation>
    <subcellularLocation>
        <location>Cytoplasm</location>
    </subcellularLocation>
    <text>Localizes to multiple discrete foci in the cytoplasm.</text>
</comment>
<comment type="miscellaneous">
    <text evidence="4">Present with 846 molecules/cell in log phase SD medium.</text>
</comment>
<comment type="similarity">
    <text evidence="11">Belongs to the PUF3 family.</text>
</comment>
<reference key="1">
    <citation type="journal article" date="1996" name="Yeast">
        <title>Sequence analysis of the CEN12 region of Saccharomyces cerevisiae on a 43.7 kb fragment of chromosome XII including an open reading frame homologous to the human cystic fibrosis transmembrane conductance regulator protein CFTR.</title>
        <authorList>
            <person name="Miosga T."/>
            <person name="Zimmermann F.K."/>
        </authorList>
    </citation>
    <scope>NUCLEOTIDE SEQUENCE [GENOMIC DNA]</scope>
    <source>
        <strain>ATCC 90840 / EAY235 / FY23</strain>
    </source>
</reference>
<reference key="2">
    <citation type="journal article" date="1997" name="Nature">
        <title>The nucleotide sequence of Saccharomyces cerevisiae chromosome XII.</title>
        <authorList>
            <person name="Johnston M."/>
            <person name="Hillier L.W."/>
            <person name="Riles L."/>
            <person name="Albermann K."/>
            <person name="Andre B."/>
            <person name="Ansorge W."/>
            <person name="Benes V."/>
            <person name="Brueckner M."/>
            <person name="Delius H."/>
            <person name="Dubois E."/>
            <person name="Duesterhoeft A."/>
            <person name="Entian K.-D."/>
            <person name="Floeth M."/>
            <person name="Goffeau A."/>
            <person name="Hebling U."/>
            <person name="Heumann K."/>
            <person name="Heuss-Neitzel D."/>
            <person name="Hilbert H."/>
            <person name="Hilger F."/>
            <person name="Kleine K."/>
            <person name="Koetter P."/>
            <person name="Louis E.J."/>
            <person name="Messenguy F."/>
            <person name="Mewes H.-W."/>
            <person name="Miosga T."/>
            <person name="Moestl D."/>
            <person name="Mueller-Auer S."/>
            <person name="Nentwich U."/>
            <person name="Obermaier B."/>
            <person name="Piravandi E."/>
            <person name="Pohl T.M."/>
            <person name="Portetelle D."/>
            <person name="Purnelle B."/>
            <person name="Rechmann S."/>
            <person name="Rieger M."/>
            <person name="Rinke M."/>
            <person name="Rose M."/>
            <person name="Scharfe M."/>
            <person name="Scherens B."/>
            <person name="Scholler P."/>
            <person name="Schwager C."/>
            <person name="Schwarz S."/>
            <person name="Underwood A.P."/>
            <person name="Urrestarazu L.A."/>
            <person name="Vandenbol M."/>
            <person name="Verhasselt P."/>
            <person name="Vierendeels F."/>
            <person name="Voet M."/>
            <person name="Volckaert G."/>
            <person name="Voss H."/>
            <person name="Wambutt R."/>
            <person name="Wedler E."/>
            <person name="Wedler H."/>
            <person name="Zimmermann F.K."/>
            <person name="Zollner A."/>
            <person name="Hani J."/>
            <person name="Hoheisel J.D."/>
        </authorList>
    </citation>
    <scope>NUCLEOTIDE SEQUENCE [LARGE SCALE GENOMIC DNA]</scope>
    <source>
        <strain>ATCC 204508 / S288c</strain>
    </source>
</reference>
<reference key="3">
    <citation type="journal article" date="2014" name="G3 (Bethesda)">
        <title>The reference genome sequence of Saccharomyces cerevisiae: Then and now.</title>
        <authorList>
            <person name="Engel S.R."/>
            <person name="Dietrich F.S."/>
            <person name="Fisk D.G."/>
            <person name="Binkley G."/>
            <person name="Balakrishnan R."/>
            <person name="Costanzo M.C."/>
            <person name="Dwight S.S."/>
            <person name="Hitz B.C."/>
            <person name="Karra K."/>
            <person name="Nash R.S."/>
            <person name="Weng S."/>
            <person name="Wong E.D."/>
            <person name="Lloyd P."/>
            <person name="Skrzypek M.S."/>
            <person name="Miyasato S.R."/>
            <person name="Simison M."/>
            <person name="Cherry J.M."/>
        </authorList>
    </citation>
    <scope>GENOME REANNOTATION</scope>
    <source>
        <strain>ATCC 204508 / S288c</strain>
    </source>
</reference>
<reference key="4">
    <citation type="journal article" date="1997" name="Yeast">
        <title>The sequence of 32kb on the left arm of yeast chromosome XII reveals six known genes, a new member of the seripauperins family and a new ABC transporter homologous to the human multidrug resistance protein.</title>
        <authorList>
            <person name="Purnelle B."/>
            <person name="Goffeau A."/>
        </authorList>
    </citation>
    <scope>NUCLEOTIDE SEQUENCE [GENOMIC DNA] OF 588-879</scope>
    <source>
        <strain>ATCC 204508 / S288c</strain>
    </source>
</reference>
<reference key="5">
    <citation type="journal article" date="2000" name="EMBO J.">
        <title>The Puf3 protein is a transcript-specific regulator of mRNA degradation in yeast.</title>
        <authorList>
            <person name="Olivas W.M."/>
            <person name="Parker R."/>
        </authorList>
    </citation>
    <scope>FUNCTION</scope>
</reference>
<reference key="6">
    <citation type="journal article" date="2003" name="Nature">
        <title>Global analysis of protein localization in budding yeast.</title>
        <authorList>
            <person name="Huh W.-K."/>
            <person name="Falvo J.V."/>
            <person name="Gerke L.C."/>
            <person name="Carroll A.S."/>
            <person name="Howson R.W."/>
            <person name="Weissman J.S."/>
            <person name="O'Shea E.K."/>
        </authorList>
    </citation>
    <scope>SUBCELLULAR LOCATION [LARGE SCALE ANALYSIS]</scope>
</reference>
<reference key="7">
    <citation type="journal article" date="2003" name="Nature">
        <title>Global analysis of protein expression in yeast.</title>
        <authorList>
            <person name="Ghaemmaghami S."/>
            <person name="Huh W.-K."/>
            <person name="Bower K."/>
            <person name="Howson R.W."/>
            <person name="Belle A."/>
            <person name="Dephoure N."/>
            <person name="O'Shea E.K."/>
            <person name="Weissman J.S."/>
        </authorList>
    </citation>
    <scope>LEVEL OF PROTEIN EXPRESSION [LARGE SCALE ANALYSIS]</scope>
</reference>
<reference key="8">
    <citation type="journal article" date="2003" name="Science">
        <title>Decapping and decay of messenger RNA occur in cytoplasmic processing bodies.</title>
        <authorList>
            <person name="Sheth U."/>
            <person name="Parker R."/>
        </authorList>
    </citation>
    <scope>SUBCELLULAR LOCATION</scope>
</reference>
<reference key="9">
    <citation type="journal article" date="2004" name="PLoS Biol.">
        <title>Extensive association of functionally and cytotopically related mRNAs with Puf family RNA-binding proteins in yeast.</title>
        <authorList>
            <person name="Gerber A.P."/>
            <person name="Herschlag D."/>
            <person name="Brown P.O."/>
        </authorList>
    </citation>
    <scope>RNA-BINDING</scope>
    <scope>SUBCELLULAR LOCATION</scope>
</reference>
<reference key="10">
    <citation type="journal article" date="2004" name="RNA">
        <title>Recruitment of the Puf3 protein to its mRNA target for regulation of mRNA decay in yeast.</title>
        <authorList>
            <person name="Jackson J.S. Jr."/>
            <person name="Houshmandi S.S."/>
            <person name="Lopez Leban F."/>
            <person name="Olivas W.M."/>
        </authorList>
    </citation>
    <scope>FUNCTION</scope>
    <scope>RNA-BINDING</scope>
</reference>
<reference key="11">
    <citation type="journal article" date="2005" name="Mol. Cell. Proteomics">
        <title>Quantitative phosphoproteomics applied to the yeast pheromone signaling pathway.</title>
        <authorList>
            <person name="Gruhler A."/>
            <person name="Olsen J.V."/>
            <person name="Mohammed S."/>
            <person name="Mortensen P."/>
            <person name="Faergeman N.J."/>
            <person name="Mann M."/>
            <person name="Jensen O.N."/>
        </authorList>
    </citation>
    <scope>PHOSPHORYLATION [LARGE SCALE ANALYSIS] AT THR-83 AND SER-207</scope>
    <scope>IDENTIFICATION BY MASS SPECTROMETRY [LARGE SCALE ANALYSIS]</scope>
    <source>
        <strain>YAL6B</strain>
    </source>
</reference>
<reference key="12">
    <citation type="journal article" date="2005" name="PLoS Comput. Biol.">
        <title>Folding free energies of 5'-UTRs impact post-transcriptional regulation on a genomic scale in yeast.</title>
        <authorList>
            <person name="Ringner M."/>
            <person name="Krogh M."/>
        </authorList>
    </citation>
    <scope>FUNCTION</scope>
</reference>
<reference key="13">
    <citation type="journal article" date="2005" name="RNA">
        <title>Yeast Puf3 mutants reveal the complexity of Puf-RNA binding and identify a loop required for regulation of mRNA decay.</title>
        <authorList>
            <person name="Houshmandi S.S."/>
            <person name="Olivas W.M."/>
        </authorList>
    </citation>
    <scope>FUNCTION</scope>
    <scope>RNA-BINDING</scope>
    <scope>MUTAGENESIS OF SER-553</scope>
</reference>
<reference key="14">
    <citation type="journal article" date="2007" name="J. Cell Biol.">
        <title>Puf3p, a Pumilio family RNA binding protein, localizes to mitochondria and regulates mitochondrial biogenesis and motility in budding yeast.</title>
        <authorList>
            <person name="Garcia-Rodriguez L.J."/>
            <person name="Gay A.C."/>
            <person name="Pon L.A."/>
        </authorList>
    </citation>
    <scope>FUNCTION</scope>
    <scope>SUBCELLULAR LOCATION</scope>
    <scope>INTERACTION WITH MDM12</scope>
</reference>
<reference key="15">
    <citation type="journal article" date="2008" name="Mol. Cell. Proteomics">
        <title>A multidimensional chromatography technology for in-depth phosphoproteome analysis.</title>
        <authorList>
            <person name="Albuquerque C.P."/>
            <person name="Smolka M.B."/>
            <person name="Payne S.H."/>
            <person name="Bafna V."/>
            <person name="Eng J."/>
            <person name="Zhou H."/>
        </authorList>
    </citation>
    <scope>IDENTIFICATION BY MASS SPECTROMETRY [LARGE SCALE ANALYSIS]</scope>
</reference>
<reference key="16">
    <citation type="journal article" date="2008" name="PLoS ONE">
        <title>Yeast mitochondrial biogenesis: a role for the PUF RNA-binding protein Puf3p in mRNA localization.</title>
        <authorList>
            <person name="Saint-Georges Y."/>
            <person name="Garcia M."/>
            <person name="Delaveau T."/>
            <person name="Jourdren L."/>
            <person name="Le Crom S."/>
            <person name="Lemoine S."/>
            <person name="Tanty V."/>
            <person name="Devaux F."/>
            <person name="Jacq C."/>
        </authorList>
    </citation>
    <scope>FUNCTION</scope>
</reference>
<reference key="17">
    <citation type="journal article" date="2008" name="RNA">
        <title>Puf1p acts in combination with other yeast Puf proteins to control mRNA stability.</title>
        <authorList>
            <person name="Ulbricht R.J."/>
            <person name="Olivas W.M."/>
        </authorList>
    </citation>
    <scope>FUNCTION</scope>
</reference>
<reference key="18">
    <citation type="journal article" date="2009" name="Science">
        <title>Global analysis of Cdk1 substrate phosphorylation sites provides insights into evolution.</title>
        <authorList>
            <person name="Holt L.J."/>
            <person name="Tuch B.B."/>
            <person name="Villen J."/>
            <person name="Johnson A.D."/>
            <person name="Gygi S.P."/>
            <person name="Morgan D.O."/>
        </authorList>
    </citation>
    <scope>PHOSPHORYLATION [LARGE SCALE ANALYSIS] AT SER-210</scope>
    <scope>IDENTIFICATION BY MASS SPECTROMETRY [LARGE SCALE ANALYSIS]</scope>
</reference>
<proteinExistence type="evidence at protein level"/>